<gene>
    <name type="ORF">AFUA_1G00970</name>
</gene>
<accession>Q4WKX3</accession>
<feature type="chain" id="PRO_0000449930" description="MFS-type transporter AFUA_1G00970">
    <location>
        <begin position="1"/>
        <end position="434"/>
    </location>
</feature>
<feature type="transmembrane region" description="Helical" evidence="1">
    <location>
        <begin position="21"/>
        <end position="41"/>
    </location>
</feature>
<feature type="transmembrane region" description="Helical" evidence="1">
    <location>
        <begin position="60"/>
        <end position="80"/>
    </location>
</feature>
<feature type="transmembrane region" description="Helical" evidence="1">
    <location>
        <begin position="87"/>
        <end position="107"/>
    </location>
</feature>
<feature type="transmembrane region" description="Helical" evidence="1">
    <location>
        <begin position="112"/>
        <end position="132"/>
    </location>
</feature>
<feature type="transmembrane region" description="Helical" evidence="1">
    <location>
        <begin position="145"/>
        <end position="165"/>
    </location>
</feature>
<feature type="transmembrane region" description="Helical" evidence="1">
    <location>
        <begin position="182"/>
        <end position="202"/>
    </location>
</feature>
<feature type="transmembrane region" description="Helical" evidence="1">
    <location>
        <begin position="240"/>
        <end position="260"/>
    </location>
</feature>
<feature type="transmembrane region" description="Helical" evidence="1">
    <location>
        <begin position="278"/>
        <end position="298"/>
    </location>
</feature>
<feature type="transmembrane region" description="Helical" evidence="1">
    <location>
        <begin position="301"/>
        <end position="321"/>
    </location>
</feature>
<feature type="transmembrane region" description="Helical" evidence="1">
    <location>
        <begin position="327"/>
        <end position="347"/>
    </location>
</feature>
<feature type="transmembrane region" description="Helical" evidence="1">
    <location>
        <begin position="364"/>
        <end position="384"/>
    </location>
</feature>
<feature type="transmembrane region" description="Helical" evidence="1">
    <location>
        <begin position="393"/>
        <end position="413"/>
    </location>
</feature>
<feature type="region of interest" description="Disordered" evidence="2">
    <location>
        <begin position="201"/>
        <end position="225"/>
    </location>
</feature>
<organism>
    <name type="scientific">Aspergillus fumigatus (strain ATCC MYA-4609 / CBS 101355 / FGSC A1100 / Af293)</name>
    <name type="common">Neosartorya fumigata</name>
    <dbReference type="NCBI Taxonomy" id="330879"/>
    <lineage>
        <taxon>Eukaryota</taxon>
        <taxon>Fungi</taxon>
        <taxon>Dikarya</taxon>
        <taxon>Ascomycota</taxon>
        <taxon>Pezizomycotina</taxon>
        <taxon>Eurotiomycetes</taxon>
        <taxon>Eurotiomycetidae</taxon>
        <taxon>Eurotiales</taxon>
        <taxon>Aspergillaceae</taxon>
        <taxon>Aspergillus</taxon>
        <taxon>Aspergillus subgen. Fumigati</taxon>
    </lineage>
</organism>
<sequence>MTVAISNPAAPPVSARAYLSVIGGTCALLCTVGFVVAFGVFQGYYTEHLLRGMSEFDIPWIGSASIFLLYVSAPICGVLVDRFGPKVLLIAGSIGVLVAIFMISLCSQYYQIFLAQAVLLGISMGFVTWPPFAVVSRNLPHHRGLALGVITGGSSVGGIVWSIMIEELLTKRNLGFPWTVRVLGFTMLPLLAFACISITEPPKQSQPQPRPALEATVEGGSASPTPKPEYASLPLLRSTVFISICVGFGLAFLGLFNPFFYISSYAAGHGASAQTSSYMISIMNAATLFGRVIPGIVADRVGHYNVMIFVLLASGITSFCWTEVRSLTGLVIWSIAYGFSSGAILSLQGACAGKIATPQNQGKAIGFLQGSLAVTVLVGSPIGGQLLGHYGYLSLSMFTGATLVMGAVVMGYARLCLNRSPMEAHQFRFLLAPN</sequence>
<proteinExistence type="evidence at transcript level"/>
<reference key="1">
    <citation type="journal article" date="2005" name="Nature">
        <title>Genomic sequence of the pathogenic and allergenic filamentous fungus Aspergillus fumigatus.</title>
        <authorList>
            <person name="Nierman W.C."/>
            <person name="Pain A."/>
            <person name="Anderson M.J."/>
            <person name="Wortman J.R."/>
            <person name="Kim H.S."/>
            <person name="Arroyo J."/>
            <person name="Berriman M."/>
            <person name="Abe K."/>
            <person name="Archer D.B."/>
            <person name="Bermejo C."/>
            <person name="Bennett J.W."/>
            <person name="Bowyer P."/>
            <person name="Chen D."/>
            <person name="Collins M."/>
            <person name="Coulsen R."/>
            <person name="Davies R."/>
            <person name="Dyer P.S."/>
            <person name="Farman M.L."/>
            <person name="Fedorova N."/>
            <person name="Fedorova N.D."/>
            <person name="Feldblyum T.V."/>
            <person name="Fischer R."/>
            <person name="Fosker N."/>
            <person name="Fraser A."/>
            <person name="Garcia J.L."/>
            <person name="Garcia M.J."/>
            <person name="Goble A."/>
            <person name="Goldman G.H."/>
            <person name="Gomi K."/>
            <person name="Griffith-Jones S."/>
            <person name="Gwilliam R."/>
            <person name="Haas B.J."/>
            <person name="Haas H."/>
            <person name="Harris D.E."/>
            <person name="Horiuchi H."/>
            <person name="Huang J."/>
            <person name="Humphray S."/>
            <person name="Jimenez J."/>
            <person name="Keller N."/>
            <person name="Khouri H."/>
            <person name="Kitamoto K."/>
            <person name="Kobayashi T."/>
            <person name="Konzack S."/>
            <person name="Kulkarni R."/>
            <person name="Kumagai T."/>
            <person name="Lafton A."/>
            <person name="Latge J.-P."/>
            <person name="Li W."/>
            <person name="Lord A."/>
            <person name="Lu C."/>
            <person name="Majoros W.H."/>
            <person name="May G.S."/>
            <person name="Miller B.L."/>
            <person name="Mohamoud Y."/>
            <person name="Molina M."/>
            <person name="Monod M."/>
            <person name="Mouyna I."/>
            <person name="Mulligan S."/>
            <person name="Murphy L.D."/>
            <person name="O'Neil S."/>
            <person name="Paulsen I."/>
            <person name="Penalva M.A."/>
            <person name="Pertea M."/>
            <person name="Price C."/>
            <person name="Pritchard B.L."/>
            <person name="Quail M.A."/>
            <person name="Rabbinowitsch E."/>
            <person name="Rawlins N."/>
            <person name="Rajandream M.A."/>
            <person name="Reichard U."/>
            <person name="Renauld H."/>
            <person name="Robson G.D."/>
            <person name="Rodriguez de Cordoba S."/>
            <person name="Rodriguez-Pena J.M."/>
            <person name="Ronning C.M."/>
            <person name="Rutter S."/>
            <person name="Salzberg S.L."/>
            <person name="Sanchez M."/>
            <person name="Sanchez-Ferrero J.C."/>
            <person name="Saunders D."/>
            <person name="Seeger K."/>
            <person name="Squares R."/>
            <person name="Squares S."/>
            <person name="Takeuchi M."/>
            <person name="Tekaia F."/>
            <person name="Turner G."/>
            <person name="Vazquez de Aldana C.R."/>
            <person name="Weidman J."/>
            <person name="White O."/>
            <person name="Woodward J.R."/>
            <person name="Yu J.-H."/>
            <person name="Fraser C.M."/>
            <person name="Galagan J.E."/>
            <person name="Asai K."/>
            <person name="Machida M."/>
            <person name="Hall N."/>
            <person name="Barrell B.G."/>
            <person name="Denning D.W."/>
        </authorList>
    </citation>
    <scope>NUCLEOTIDE SEQUENCE [LARGE SCALE GENOMIC DNA]</scope>
    <source>
        <strain>ATCC MYA-4609 / CBS 101355 / FGSC A1100 / Af293</strain>
    </source>
</reference>
<reference key="2">
    <citation type="journal article" date="2020" name="Elife">
        <title>Targeted induction of a silent fungal gene cluster encoding the bacteria-specific germination inhibitor fumigermin.</title>
        <authorList>
            <person name="Stroe M.C."/>
            <person name="Netzker T."/>
            <person name="Scherlach K."/>
            <person name="Krueger T."/>
            <person name="Hertweck C."/>
            <person name="Valiante V."/>
            <person name="Brakhage A.A."/>
        </authorList>
    </citation>
    <scope>FUNCTION</scope>
    <scope>INDUCTION</scope>
</reference>
<protein>
    <recommendedName>
        <fullName evidence="4">MFS-type transporter AFUA_1G00970</fullName>
    </recommendedName>
    <alternativeName>
        <fullName evidence="4">Fumigermin biosynthesis cluster protein AFUA_1G00970</fullName>
    </alternativeName>
</protein>
<dbReference type="EMBL" id="AAHF01000007">
    <property type="protein sequence ID" value="EAL87809.1"/>
    <property type="molecule type" value="Genomic_DNA"/>
</dbReference>
<dbReference type="RefSeq" id="XP_749847.1">
    <property type="nucleotide sequence ID" value="XM_744754.1"/>
</dbReference>
<dbReference type="SMR" id="Q4WKX3"/>
<dbReference type="EnsemblFungi" id="EAL87809">
    <property type="protein sequence ID" value="EAL87809"/>
    <property type="gene ID" value="AFUA_1G00970"/>
</dbReference>
<dbReference type="GeneID" id="3507515"/>
<dbReference type="KEGG" id="afm:AFUA_1G00970"/>
<dbReference type="VEuPathDB" id="FungiDB:Afu1g00970"/>
<dbReference type="HOGENOM" id="CLU_001265_1_1_1"/>
<dbReference type="InParanoid" id="Q4WKX3"/>
<dbReference type="OMA" id="VFPFIHL"/>
<dbReference type="OrthoDB" id="6499973at2759"/>
<dbReference type="Proteomes" id="UP000002530">
    <property type="component" value="Chromosome 1"/>
</dbReference>
<dbReference type="GO" id="GO:0005886">
    <property type="term" value="C:plasma membrane"/>
    <property type="evidence" value="ECO:0000318"/>
    <property type="project" value="GO_Central"/>
</dbReference>
<dbReference type="GO" id="GO:0022857">
    <property type="term" value="F:transmembrane transporter activity"/>
    <property type="evidence" value="ECO:0000318"/>
    <property type="project" value="GO_Central"/>
</dbReference>
<dbReference type="Gene3D" id="1.20.1250.20">
    <property type="entry name" value="MFS general substrate transporter like domains"/>
    <property type="match status" value="2"/>
</dbReference>
<dbReference type="InterPro" id="IPR011701">
    <property type="entry name" value="MFS"/>
</dbReference>
<dbReference type="InterPro" id="IPR020846">
    <property type="entry name" value="MFS_dom"/>
</dbReference>
<dbReference type="InterPro" id="IPR036259">
    <property type="entry name" value="MFS_trans_sf"/>
</dbReference>
<dbReference type="InterPro" id="IPR050327">
    <property type="entry name" value="Proton-linked_MCT"/>
</dbReference>
<dbReference type="PANTHER" id="PTHR11360:SF250">
    <property type="entry name" value="MFS-TYPE TRANSPORTER AFUA_1G00970"/>
    <property type="match status" value="1"/>
</dbReference>
<dbReference type="PANTHER" id="PTHR11360">
    <property type="entry name" value="MONOCARBOXYLATE TRANSPORTER"/>
    <property type="match status" value="1"/>
</dbReference>
<dbReference type="Pfam" id="PF07690">
    <property type="entry name" value="MFS_1"/>
    <property type="match status" value="1"/>
</dbReference>
<dbReference type="SUPFAM" id="SSF103473">
    <property type="entry name" value="MFS general substrate transporter"/>
    <property type="match status" value="1"/>
</dbReference>
<dbReference type="PROSITE" id="PS50850">
    <property type="entry name" value="MFS"/>
    <property type="match status" value="1"/>
</dbReference>
<keyword id="KW-1003">Cell membrane</keyword>
<keyword id="KW-0472">Membrane</keyword>
<keyword id="KW-1185">Reference proteome</keyword>
<keyword id="KW-0812">Transmembrane</keyword>
<keyword id="KW-1133">Transmembrane helix</keyword>
<keyword id="KW-0813">Transport</keyword>
<name>FGNE_ASPFU</name>
<comment type="function">
    <text evidence="3 6">MFS-type transporter; part of the gene cluster that mediates the biosynthesis of fumigermin that inhibits germination of spores of the inducing S.rapamycinicus, and thus helps the fungus to defend resources in the shared habitat against a bacterial competitor (PubMed:32083553). May be involved in the secretion of fumigermin (Probable).</text>
</comment>
<comment type="subcellular location">
    <subcellularLocation>
        <location evidence="6">Cell membrane</location>
        <topology evidence="1">Multi-pass membrane protein</topology>
    </subcellularLocation>
</comment>
<comment type="induction">
    <text evidence="3">Expression is up-regulated during co-cultivation of A.fumigatus with Streptomyces rapamycinicus that triggersthe production of the polyketide fumigermin during the bacterial-fungal interaction.</text>
</comment>
<comment type="similarity">
    <text evidence="5">Belongs to the major facilitator superfamily. Monocarboxylate porter (TC 2.A.1.13) family.</text>
</comment>
<evidence type="ECO:0000255" key="1"/>
<evidence type="ECO:0000256" key="2">
    <source>
        <dbReference type="SAM" id="MobiDB-lite"/>
    </source>
</evidence>
<evidence type="ECO:0000269" key="3">
    <source>
    </source>
</evidence>
<evidence type="ECO:0000303" key="4">
    <source>
    </source>
</evidence>
<evidence type="ECO:0000305" key="5"/>
<evidence type="ECO:0000305" key="6">
    <source>
    </source>
</evidence>